<proteinExistence type="evidence at transcript level"/>
<feature type="initiator methionine" description="Removed" evidence="1">
    <location>
        <position position="1"/>
    </location>
</feature>
<feature type="chain" id="PRO_0000203686" description="Guanine nucleotide-binding protein G(i) subunit alpha">
    <location>
        <begin position="2"/>
        <end position="354"/>
    </location>
</feature>
<feature type="domain" description="G-alpha" evidence="3">
    <location>
        <begin position="32"/>
        <end position="354"/>
    </location>
</feature>
<feature type="region of interest" description="G1 motif" evidence="3">
    <location>
        <begin position="35"/>
        <end position="48"/>
    </location>
</feature>
<feature type="region of interest" description="G2 motif" evidence="3">
    <location>
        <begin position="173"/>
        <end position="181"/>
    </location>
</feature>
<feature type="region of interest" description="G3 motif" evidence="3">
    <location>
        <begin position="196"/>
        <end position="205"/>
    </location>
</feature>
<feature type="region of interest" description="G4 motif" evidence="3">
    <location>
        <begin position="265"/>
        <end position="272"/>
    </location>
</feature>
<feature type="region of interest" description="G5 motif" evidence="3">
    <location>
        <begin position="324"/>
        <end position="329"/>
    </location>
</feature>
<feature type="binding site" evidence="1">
    <location>
        <begin position="40"/>
        <end position="47"/>
    </location>
    <ligand>
        <name>GTP</name>
        <dbReference type="ChEBI" id="CHEBI:37565"/>
    </ligand>
</feature>
<feature type="binding site" evidence="1">
    <location>
        <position position="47"/>
    </location>
    <ligand>
        <name>Mg(2+)</name>
        <dbReference type="ChEBI" id="CHEBI:18420"/>
    </ligand>
</feature>
<feature type="binding site" evidence="1">
    <location>
        <begin position="175"/>
        <end position="181"/>
    </location>
    <ligand>
        <name>GTP</name>
        <dbReference type="ChEBI" id="CHEBI:37565"/>
    </ligand>
</feature>
<feature type="binding site" evidence="1">
    <location>
        <position position="181"/>
    </location>
    <ligand>
        <name>Mg(2+)</name>
        <dbReference type="ChEBI" id="CHEBI:18420"/>
    </ligand>
</feature>
<feature type="binding site" evidence="1">
    <location>
        <begin position="200"/>
        <end position="204"/>
    </location>
    <ligand>
        <name>GTP</name>
        <dbReference type="ChEBI" id="CHEBI:37565"/>
    </ligand>
</feature>
<feature type="binding site" evidence="1">
    <location>
        <begin position="269"/>
        <end position="272"/>
    </location>
    <ligand>
        <name>GTP</name>
        <dbReference type="ChEBI" id="CHEBI:37565"/>
    </ligand>
</feature>
<feature type="binding site" evidence="1">
    <location>
        <position position="326"/>
    </location>
    <ligand>
        <name>GTP</name>
        <dbReference type="ChEBI" id="CHEBI:37565"/>
    </ligand>
</feature>
<feature type="lipid moiety-binding region" description="N-myristoyl glycine" evidence="2">
    <location>
        <position position="2"/>
    </location>
</feature>
<feature type="lipid moiety-binding region" description="S-palmitoyl cysteine" evidence="2">
    <location>
        <position position="3"/>
    </location>
</feature>
<organism>
    <name type="scientific">Planorbella trivolvis</name>
    <name type="common">Marsh rams-horn</name>
    <name type="synonym">Helisoma trivolvis</name>
    <dbReference type="NCBI Taxonomy" id="283763"/>
    <lineage>
        <taxon>Eukaryota</taxon>
        <taxon>Metazoa</taxon>
        <taxon>Spiralia</taxon>
        <taxon>Lophotrochozoa</taxon>
        <taxon>Mollusca</taxon>
        <taxon>Gastropoda</taxon>
        <taxon>Heterobranchia</taxon>
        <taxon>Euthyneura</taxon>
        <taxon>Panpulmonata</taxon>
        <taxon>Hygrophila</taxon>
        <taxon>Lymnaeoidea</taxon>
        <taxon>Planorbidae</taxon>
        <taxon>Planorbella</taxon>
    </lineage>
</organism>
<reference key="1">
    <citation type="journal article" date="1993" name="J. Physiol. Paris">
        <title>Roles for arachidonic acid and GTP-binding proteins in synaptic transmission.</title>
        <authorList>
            <person name="Durgerian S."/>
            <person name="Bahls F."/>
            <person name="Richmond J."/>
            <person name="Doyle R.T."/>
            <person name="Larson D.D."/>
            <person name="Haydon P.G."/>
        </authorList>
    </citation>
    <scope>NUCLEOTIDE SEQUENCE [MRNA]</scope>
    <source>
        <strain>Oregon red</strain>
        <tissue>Central ganglion</tissue>
    </source>
</reference>
<dbReference type="EMBL" id="L18922">
    <property type="protein sequence ID" value="AAC41538.1"/>
    <property type="molecule type" value="mRNA"/>
</dbReference>
<dbReference type="SMR" id="P51876"/>
<dbReference type="GO" id="GO:0005737">
    <property type="term" value="C:cytoplasm"/>
    <property type="evidence" value="ECO:0007669"/>
    <property type="project" value="TreeGrafter"/>
</dbReference>
<dbReference type="GO" id="GO:0005834">
    <property type="term" value="C:heterotrimeric G-protein complex"/>
    <property type="evidence" value="ECO:0007669"/>
    <property type="project" value="TreeGrafter"/>
</dbReference>
<dbReference type="GO" id="GO:0001664">
    <property type="term" value="F:G protein-coupled receptor binding"/>
    <property type="evidence" value="ECO:0007669"/>
    <property type="project" value="TreeGrafter"/>
</dbReference>
<dbReference type="GO" id="GO:0031683">
    <property type="term" value="F:G-protein beta/gamma-subunit complex binding"/>
    <property type="evidence" value="ECO:0007669"/>
    <property type="project" value="InterPro"/>
</dbReference>
<dbReference type="GO" id="GO:0005525">
    <property type="term" value="F:GTP binding"/>
    <property type="evidence" value="ECO:0007669"/>
    <property type="project" value="UniProtKB-KW"/>
</dbReference>
<dbReference type="GO" id="GO:0003924">
    <property type="term" value="F:GTPase activity"/>
    <property type="evidence" value="ECO:0007669"/>
    <property type="project" value="InterPro"/>
</dbReference>
<dbReference type="GO" id="GO:0046872">
    <property type="term" value="F:metal ion binding"/>
    <property type="evidence" value="ECO:0007669"/>
    <property type="project" value="UniProtKB-KW"/>
</dbReference>
<dbReference type="GO" id="GO:0007188">
    <property type="term" value="P:adenylate cyclase-modulating G protein-coupled receptor signaling pathway"/>
    <property type="evidence" value="ECO:0007669"/>
    <property type="project" value="InterPro"/>
</dbReference>
<dbReference type="CDD" id="cd00066">
    <property type="entry name" value="G-alpha"/>
    <property type="match status" value="1"/>
</dbReference>
<dbReference type="FunFam" id="1.10.400.10:FF:000001">
    <property type="entry name" value="Guanine nucleotide-binding protein G(I) subunit alpha"/>
    <property type="match status" value="1"/>
</dbReference>
<dbReference type="FunFam" id="3.40.50.300:FF:002487">
    <property type="entry name" value="Guanine nucleotide-binding protein G(i) subunit alpha-1"/>
    <property type="match status" value="1"/>
</dbReference>
<dbReference type="FunFam" id="3.40.50.300:FF:003559">
    <property type="entry name" value="Guanine nucleotide-binding protein G(i) subunit alpha-1"/>
    <property type="match status" value="1"/>
</dbReference>
<dbReference type="Gene3D" id="1.10.400.10">
    <property type="entry name" value="GI Alpha 1, domain 2-like"/>
    <property type="match status" value="1"/>
</dbReference>
<dbReference type="Gene3D" id="3.40.50.300">
    <property type="entry name" value="P-loop containing nucleotide triphosphate hydrolases"/>
    <property type="match status" value="1"/>
</dbReference>
<dbReference type="InterPro" id="IPR001408">
    <property type="entry name" value="Gprotein_alpha_I"/>
</dbReference>
<dbReference type="InterPro" id="IPR001019">
    <property type="entry name" value="Gprotein_alpha_su"/>
</dbReference>
<dbReference type="InterPro" id="IPR011025">
    <property type="entry name" value="GproteinA_insert"/>
</dbReference>
<dbReference type="InterPro" id="IPR027417">
    <property type="entry name" value="P-loop_NTPase"/>
</dbReference>
<dbReference type="PANTHER" id="PTHR10218:SF227">
    <property type="entry name" value="G PROTEIN ALPHA I SUBUNIT"/>
    <property type="match status" value="1"/>
</dbReference>
<dbReference type="PANTHER" id="PTHR10218">
    <property type="entry name" value="GTP-BINDING PROTEIN ALPHA SUBUNIT"/>
    <property type="match status" value="1"/>
</dbReference>
<dbReference type="Pfam" id="PF00503">
    <property type="entry name" value="G-alpha"/>
    <property type="match status" value="1"/>
</dbReference>
<dbReference type="PRINTS" id="PR00318">
    <property type="entry name" value="GPROTEINA"/>
</dbReference>
<dbReference type="PRINTS" id="PR00441">
    <property type="entry name" value="GPROTEINAI"/>
</dbReference>
<dbReference type="SMART" id="SM00275">
    <property type="entry name" value="G_alpha"/>
    <property type="match status" value="1"/>
</dbReference>
<dbReference type="SUPFAM" id="SSF52540">
    <property type="entry name" value="P-loop containing nucleoside triphosphate hydrolases"/>
    <property type="match status" value="1"/>
</dbReference>
<dbReference type="SUPFAM" id="SSF47895">
    <property type="entry name" value="Transducin (alpha subunit), insertion domain"/>
    <property type="match status" value="1"/>
</dbReference>
<dbReference type="PROSITE" id="PS51882">
    <property type="entry name" value="G_ALPHA"/>
    <property type="match status" value="1"/>
</dbReference>
<accession>P51876</accession>
<name>GNAI_PLATR</name>
<comment type="function">
    <text>Guanine nucleotide-binding proteins (G proteins) are involved as modulators or transducers in various transmembrane signaling systems.</text>
</comment>
<comment type="subunit">
    <text>G proteins are composed of 3 units; alpha, beta and gamma. The alpha chain contains the guanine nucleotide binding site.</text>
</comment>
<comment type="similarity">
    <text evidence="4">Belongs to the G-alpha family. G(i/o/t/z) subfamily.</text>
</comment>
<evidence type="ECO:0000250" key="1"/>
<evidence type="ECO:0000255" key="2"/>
<evidence type="ECO:0000255" key="3">
    <source>
        <dbReference type="PROSITE-ProRule" id="PRU01230"/>
    </source>
</evidence>
<evidence type="ECO:0000305" key="4"/>
<sequence>MGCVTSQEDKAAVERSKQIDKSLRMDGEKAAREVKLLLLGAGESGKSTIVKQMKIIHEKGYSQEECLQYNPVVYSNAIQSMIAIIKAMGQLKIQFGHPDRAEEARQFFALAGHADEGEMSQELSGIMKRLWKDVGVQECFSRSREYQLNDSAEYYLNALDRISAPGYIPTEQDVLRTRVKTTGIVETHFTFKDLHFKMFDVGGQRSERKKWIHCFEGVTAIIFIVAMSEYDLTLAEDQEMNRMMESMKLFDSICNNKWFTETSIILFLNKKDLFEEKIKKSPLTICFPEYTGANTYEEAAAYIQLQFENLNKKKDTKEIYSHFTCATDTNNVQFVFDAVTDVIIKNNLKDCGLF</sequence>
<protein>
    <recommendedName>
        <fullName>Guanine nucleotide-binding protein G(i) subunit alpha</fullName>
    </recommendedName>
    <alternativeName>
        <fullName>Adenylate cyclase-inhibiting G alpha protein</fullName>
    </alternativeName>
</protein>
<keyword id="KW-0342">GTP-binding</keyword>
<keyword id="KW-0449">Lipoprotein</keyword>
<keyword id="KW-0460">Magnesium</keyword>
<keyword id="KW-0479">Metal-binding</keyword>
<keyword id="KW-0519">Myristate</keyword>
<keyword id="KW-0547">Nucleotide-binding</keyword>
<keyword id="KW-0564">Palmitate</keyword>
<keyword id="KW-0807">Transducer</keyword>